<organism>
    <name type="scientific">Clostridium tetani (strain Massachusetts / E88)</name>
    <dbReference type="NCBI Taxonomy" id="212717"/>
    <lineage>
        <taxon>Bacteria</taxon>
        <taxon>Bacillati</taxon>
        <taxon>Bacillota</taxon>
        <taxon>Clostridia</taxon>
        <taxon>Eubacteriales</taxon>
        <taxon>Clostridiaceae</taxon>
        <taxon>Clostridium</taxon>
    </lineage>
</organism>
<accession>Q898W1</accession>
<comment type="function">
    <text evidence="1">Part of the Sec protein translocase complex. Interacts with the SecYEG preprotein conducting channel. Has a central role in coupling the hydrolysis of ATP to the transfer of proteins into and across the cell membrane, serving as an ATP-driven molecular motor driving the stepwise translocation of polypeptide chains across the membrane.</text>
</comment>
<comment type="catalytic activity">
    <reaction evidence="1">
        <text>ATP + H2O + cellular proteinSide 1 = ADP + phosphate + cellular proteinSide 2.</text>
        <dbReference type="EC" id="7.4.2.8"/>
    </reaction>
</comment>
<comment type="cofactor">
    <cofactor evidence="1">
        <name>Zn(2+)</name>
        <dbReference type="ChEBI" id="CHEBI:29105"/>
    </cofactor>
    <text evidence="1">May bind 1 zinc ion per subunit.</text>
</comment>
<comment type="subunit">
    <text evidence="1">Monomer and homodimer. Part of the essential Sec protein translocation apparatus which comprises SecA, SecYEG and auxiliary proteins SecDF. Other proteins may also be involved.</text>
</comment>
<comment type="subcellular location">
    <subcellularLocation>
        <location evidence="1">Cell membrane</location>
        <topology evidence="1">Peripheral membrane protein</topology>
        <orientation evidence="1">Cytoplasmic side</orientation>
    </subcellularLocation>
    <subcellularLocation>
        <location evidence="1">Cytoplasm</location>
    </subcellularLocation>
    <text evidence="1">Distribution is 50-50.</text>
</comment>
<comment type="similarity">
    <text evidence="1">Belongs to the SecA family.</text>
</comment>
<comment type="sequence caution" evidence="3">
    <conflict type="erroneous initiation">
        <sequence resource="EMBL-CDS" id="AAO34968"/>
    </conflict>
    <text>Extended N-terminus.</text>
</comment>
<dbReference type="EC" id="7.4.2.8" evidence="1"/>
<dbReference type="EMBL" id="AE015927">
    <property type="protein sequence ID" value="AAO34968.1"/>
    <property type="status" value="ALT_INIT"/>
    <property type="molecule type" value="Genomic_DNA"/>
</dbReference>
<dbReference type="RefSeq" id="WP_035110978.1">
    <property type="nucleotide sequence ID" value="NC_004557.1"/>
</dbReference>
<dbReference type="SMR" id="Q898W1"/>
<dbReference type="STRING" id="212717.CTC_00327"/>
<dbReference type="GeneID" id="24254597"/>
<dbReference type="KEGG" id="ctc:CTC_00327"/>
<dbReference type="HOGENOM" id="CLU_005314_3_0_9"/>
<dbReference type="OrthoDB" id="9805579at2"/>
<dbReference type="Proteomes" id="UP000001412">
    <property type="component" value="Chromosome"/>
</dbReference>
<dbReference type="GO" id="GO:0031522">
    <property type="term" value="C:cell envelope Sec protein transport complex"/>
    <property type="evidence" value="ECO:0007669"/>
    <property type="project" value="TreeGrafter"/>
</dbReference>
<dbReference type="GO" id="GO:0005829">
    <property type="term" value="C:cytosol"/>
    <property type="evidence" value="ECO:0007669"/>
    <property type="project" value="TreeGrafter"/>
</dbReference>
<dbReference type="GO" id="GO:0005886">
    <property type="term" value="C:plasma membrane"/>
    <property type="evidence" value="ECO:0007669"/>
    <property type="project" value="UniProtKB-SubCell"/>
</dbReference>
<dbReference type="GO" id="GO:0005524">
    <property type="term" value="F:ATP binding"/>
    <property type="evidence" value="ECO:0007669"/>
    <property type="project" value="UniProtKB-UniRule"/>
</dbReference>
<dbReference type="GO" id="GO:0046872">
    <property type="term" value="F:metal ion binding"/>
    <property type="evidence" value="ECO:0007669"/>
    <property type="project" value="UniProtKB-KW"/>
</dbReference>
<dbReference type="GO" id="GO:0008564">
    <property type="term" value="F:protein-exporting ATPase activity"/>
    <property type="evidence" value="ECO:0007669"/>
    <property type="project" value="UniProtKB-EC"/>
</dbReference>
<dbReference type="GO" id="GO:0065002">
    <property type="term" value="P:intracellular protein transmembrane transport"/>
    <property type="evidence" value="ECO:0007669"/>
    <property type="project" value="UniProtKB-UniRule"/>
</dbReference>
<dbReference type="GO" id="GO:0017038">
    <property type="term" value="P:protein import"/>
    <property type="evidence" value="ECO:0007669"/>
    <property type="project" value="InterPro"/>
</dbReference>
<dbReference type="GO" id="GO:0006605">
    <property type="term" value="P:protein targeting"/>
    <property type="evidence" value="ECO:0007669"/>
    <property type="project" value="UniProtKB-UniRule"/>
</dbReference>
<dbReference type="GO" id="GO:0043952">
    <property type="term" value="P:protein transport by the Sec complex"/>
    <property type="evidence" value="ECO:0007669"/>
    <property type="project" value="TreeGrafter"/>
</dbReference>
<dbReference type="CDD" id="cd17928">
    <property type="entry name" value="DEXDc_SecA"/>
    <property type="match status" value="1"/>
</dbReference>
<dbReference type="CDD" id="cd18803">
    <property type="entry name" value="SF2_C_secA"/>
    <property type="match status" value="1"/>
</dbReference>
<dbReference type="FunFam" id="1.10.3060.10:FF:000002">
    <property type="entry name" value="Preprotein translocase subunit SecA"/>
    <property type="match status" value="1"/>
</dbReference>
<dbReference type="FunFam" id="3.40.50.300:FF:000694">
    <property type="entry name" value="Preprotein translocase subunit SecA"/>
    <property type="match status" value="1"/>
</dbReference>
<dbReference type="FunFam" id="3.90.1440.10:FF:000001">
    <property type="entry name" value="Preprotein translocase subunit SecA"/>
    <property type="match status" value="1"/>
</dbReference>
<dbReference type="FunFam" id="3.40.50.300:FF:000334">
    <property type="entry name" value="Protein translocase subunit SecA"/>
    <property type="match status" value="1"/>
</dbReference>
<dbReference type="Gene3D" id="1.10.3060.10">
    <property type="entry name" value="Helical scaffold and wing domains of SecA"/>
    <property type="match status" value="1"/>
</dbReference>
<dbReference type="Gene3D" id="3.40.50.300">
    <property type="entry name" value="P-loop containing nucleotide triphosphate hydrolases"/>
    <property type="match status" value="3"/>
</dbReference>
<dbReference type="Gene3D" id="3.90.1440.10">
    <property type="entry name" value="SecA, preprotein cross-linking domain"/>
    <property type="match status" value="1"/>
</dbReference>
<dbReference type="HAMAP" id="MF_01382">
    <property type="entry name" value="SecA"/>
    <property type="match status" value="1"/>
</dbReference>
<dbReference type="InterPro" id="IPR014001">
    <property type="entry name" value="Helicase_ATP-bd"/>
</dbReference>
<dbReference type="InterPro" id="IPR001650">
    <property type="entry name" value="Helicase_C-like"/>
</dbReference>
<dbReference type="InterPro" id="IPR027417">
    <property type="entry name" value="P-loop_NTPase"/>
</dbReference>
<dbReference type="InterPro" id="IPR004027">
    <property type="entry name" value="SEC_C_motif"/>
</dbReference>
<dbReference type="InterPro" id="IPR000185">
    <property type="entry name" value="SecA"/>
</dbReference>
<dbReference type="InterPro" id="IPR020937">
    <property type="entry name" value="SecA_CS"/>
</dbReference>
<dbReference type="InterPro" id="IPR011115">
    <property type="entry name" value="SecA_DEAD"/>
</dbReference>
<dbReference type="InterPro" id="IPR014018">
    <property type="entry name" value="SecA_motor_DEAD"/>
</dbReference>
<dbReference type="InterPro" id="IPR011130">
    <property type="entry name" value="SecA_preprotein_X-link_dom"/>
</dbReference>
<dbReference type="InterPro" id="IPR044722">
    <property type="entry name" value="SecA_SF2_C"/>
</dbReference>
<dbReference type="InterPro" id="IPR011116">
    <property type="entry name" value="SecA_Wing/Scaffold"/>
</dbReference>
<dbReference type="InterPro" id="IPR036266">
    <property type="entry name" value="SecA_Wing/Scaffold_sf"/>
</dbReference>
<dbReference type="InterPro" id="IPR036670">
    <property type="entry name" value="SecA_X-link_sf"/>
</dbReference>
<dbReference type="NCBIfam" id="NF006630">
    <property type="entry name" value="PRK09200.1"/>
    <property type="match status" value="1"/>
</dbReference>
<dbReference type="NCBIfam" id="NF009538">
    <property type="entry name" value="PRK12904.1"/>
    <property type="match status" value="1"/>
</dbReference>
<dbReference type="NCBIfam" id="TIGR00963">
    <property type="entry name" value="secA"/>
    <property type="match status" value="1"/>
</dbReference>
<dbReference type="PANTHER" id="PTHR30612:SF0">
    <property type="entry name" value="CHLOROPLAST PROTEIN-TRANSPORTING ATPASE"/>
    <property type="match status" value="1"/>
</dbReference>
<dbReference type="PANTHER" id="PTHR30612">
    <property type="entry name" value="SECA INNER MEMBRANE COMPONENT OF SEC PROTEIN SECRETION SYSTEM"/>
    <property type="match status" value="1"/>
</dbReference>
<dbReference type="Pfam" id="PF21090">
    <property type="entry name" value="P-loop_SecA"/>
    <property type="match status" value="1"/>
</dbReference>
<dbReference type="Pfam" id="PF02810">
    <property type="entry name" value="SEC-C"/>
    <property type="match status" value="1"/>
</dbReference>
<dbReference type="Pfam" id="PF07517">
    <property type="entry name" value="SecA_DEAD"/>
    <property type="match status" value="1"/>
</dbReference>
<dbReference type="Pfam" id="PF01043">
    <property type="entry name" value="SecA_PP_bind"/>
    <property type="match status" value="1"/>
</dbReference>
<dbReference type="Pfam" id="PF07516">
    <property type="entry name" value="SecA_SW"/>
    <property type="match status" value="1"/>
</dbReference>
<dbReference type="PRINTS" id="PR00906">
    <property type="entry name" value="SECA"/>
</dbReference>
<dbReference type="SMART" id="SM00957">
    <property type="entry name" value="SecA_DEAD"/>
    <property type="match status" value="1"/>
</dbReference>
<dbReference type="SMART" id="SM00958">
    <property type="entry name" value="SecA_PP_bind"/>
    <property type="match status" value="1"/>
</dbReference>
<dbReference type="SUPFAM" id="SSF81886">
    <property type="entry name" value="Helical scaffold and wing domains of SecA"/>
    <property type="match status" value="1"/>
</dbReference>
<dbReference type="SUPFAM" id="SSF52540">
    <property type="entry name" value="P-loop containing nucleoside triphosphate hydrolases"/>
    <property type="match status" value="2"/>
</dbReference>
<dbReference type="SUPFAM" id="SSF81767">
    <property type="entry name" value="Pre-protein crosslinking domain of SecA"/>
    <property type="match status" value="1"/>
</dbReference>
<dbReference type="PROSITE" id="PS01312">
    <property type="entry name" value="SECA"/>
    <property type="match status" value="1"/>
</dbReference>
<dbReference type="PROSITE" id="PS51196">
    <property type="entry name" value="SECA_MOTOR_DEAD"/>
    <property type="match status" value="1"/>
</dbReference>
<reference key="1">
    <citation type="journal article" date="2003" name="Proc. Natl. Acad. Sci. U.S.A.">
        <title>The genome sequence of Clostridium tetani, the causative agent of tetanus disease.</title>
        <authorList>
            <person name="Brueggemann H."/>
            <person name="Baeumer S."/>
            <person name="Fricke W.F."/>
            <person name="Wiezer A."/>
            <person name="Liesegang H."/>
            <person name="Decker I."/>
            <person name="Herzberg C."/>
            <person name="Martinez-Arias R."/>
            <person name="Merkl R."/>
            <person name="Henne A."/>
            <person name="Gottschalk G."/>
        </authorList>
    </citation>
    <scope>NUCLEOTIDE SEQUENCE [LARGE SCALE GENOMIC DNA]</scope>
    <source>
        <strain>Massachusetts / E88</strain>
    </source>
</reference>
<keyword id="KW-0067">ATP-binding</keyword>
<keyword id="KW-1003">Cell membrane</keyword>
<keyword id="KW-0963">Cytoplasm</keyword>
<keyword id="KW-0472">Membrane</keyword>
<keyword id="KW-0479">Metal-binding</keyword>
<keyword id="KW-0547">Nucleotide-binding</keyword>
<keyword id="KW-0653">Protein transport</keyword>
<keyword id="KW-1185">Reference proteome</keyword>
<keyword id="KW-1278">Translocase</keyword>
<keyword id="KW-0811">Translocation</keyword>
<keyword id="KW-0813">Transport</keyword>
<keyword id="KW-0862">Zinc</keyword>
<name>SECA_CLOTE</name>
<sequence length="836" mass="95966">MRIWEKIFGTYSQRELKRVIPIVDKIDKLDQTMQKLTDEELKNKTNEFKERLSKGETLDDILVEAFAVAREAAWRVVKLKPYREQLIGGIILHQGRIAEMKTGEGKTLVATLPAYLNALKGEGVHIVTVNDYLAKRDKETMGAIYEFLGLTVGVILHDLEHNERQEAYNCDITYGTNSELGFDYLRDNMVVYKEERVQRKLNFSIVDEVDSILIDEARTPLIISGQGEKSTEFYKVADYFAKSLIKEEDFTVDEKASAVMLTDKGIEKAEAYFKLENYADPENMEIQHHVVQALKANYSMKKDTDYMVRDGEVLIVDEFTGRVMDGRRYSDGLHQAIEAKEGVNVERESKTLATITYQNFFRMYDKLSGMTGTAQTEEVEFREIYGLDVVVIPTHKPVLRIDNSDVVYKSEKGKYMAIVDEIVETHKKGQPVLVGTVSIEKSELISEMLKRKGVPHQVLNAKYHEKEAEIVSHAGEYGMVTIATNMAGRGTDIKLEEEVIKAGGLKIIGTERHESRRIDNQLRGRSGRQGDPGASRFYVSLEDDLMRIFGSDKLKGIVEKLGLGDDEAIESKMVSNAIENAQKKVEGNNFDIRKTLIQYDDVINKQREIIYKQRSEVLEGADLKDQIQEMIRDVINSVVDSHISDIEEEFKEELDKLIKFLEDIFLPKDYIKVEHLENLSNDEIKEKLYDIAKNIYTDKEEEFESEQMRDIERVILLRVVDTKWMDHIDNMDHLKQGIGLRAYKQQDPVQAYQFEGSQMFDEMIYNIKVDTVRYLFRVQIEKAPEREQVAKETSTNQGGDDTLKKQPIKKEPKIGRNDLCPCGSGKKYKNCCGREV</sequence>
<proteinExistence type="inferred from homology"/>
<gene>
    <name evidence="1" type="primary">secA</name>
    <name type="ordered locus">CTC_00327</name>
</gene>
<feature type="chain" id="PRO_0000320785" description="Protein translocase subunit SecA">
    <location>
        <begin position="1"/>
        <end position="836"/>
    </location>
</feature>
<feature type="region of interest" description="Disordered" evidence="2">
    <location>
        <begin position="786"/>
        <end position="817"/>
    </location>
</feature>
<feature type="compositionally biased region" description="Basic and acidic residues" evidence="2">
    <location>
        <begin position="801"/>
        <end position="816"/>
    </location>
</feature>
<feature type="binding site" evidence="1">
    <location>
        <position position="85"/>
    </location>
    <ligand>
        <name>ATP</name>
        <dbReference type="ChEBI" id="CHEBI:30616"/>
    </ligand>
</feature>
<feature type="binding site" evidence="1">
    <location>
        <begin position="103"/>
        <end position="107"/>
    </location>
    <ligand>
        <name>ATP</name>
        <dbReference type="ChEBI" id="CHEBI:30616"/>
    </ligand>
</feature>
<feature type="binding site" evidence="1">
    <location>
        <position position="492"/>
    </location>
    <ligand>
        <name>ATP</name>
        <dbReference type="ChEBI" id="CHEBI:30616"/>
    </ligand>
</feature>
<feature type="binding site" evidence="1">
    <location>
        <position position="820"/>
    </location>
    <ligand>
        <name>Zn(2+)</name>
        <dbReference type="ChEBI" id="CHEBI:29105"/>
    </ligand>
</feature>
<feature type="binding site" evidence="1">
    <location>
        <position position="822"/>
    </location>
    <ligand>
        <name>Zn(2+)</name>
        <dbReference type="ChEBI" id="CHEBI:29105"/>
    </ligand>
</feature>
<feature type="binding site" evidence="1">
    <location>
        <position position="831"/>
    </location>
    <ligand>
        <name>Zn(2+)</name>
        <dbReference type="ChEBI" id="CHEBI:29105"/>
    </ligand>
</feature>
<feature type="binding site" evidence="1">
    <location>
        <position position="832"/>
    </location>
    <ligand>
        <name>Zn(2+)</name>
        <dbReference type="ChEBI" id="CHEBI:29105"/>
    </ligand>
</feature>
<protein>
    <recommendedName>
        <fullName evidence="1">Protein translocase subunit SecA</fullName>
        <ecNumber evidence="1">7.4.2.8</ecNumber>
    </recommendedName>
</protein>
<evidence type="ECO:0000255" key="1">
    <source>
        <dbReference type="HAMAP-Rule" id="MF_01382"/>
    </source>
</evidence>
<evidence type="ECO:0000256" key="2">
    <source>
        <dbReference type="SAM" id="MobiDB-lite"/>
    </source>
</evidence>
<evidence type="ECO:0000305" key="3"/>